<keyword id="KW-0687">Ribonucleoprotein</keyword>
<keyword id="KW-0689">Ribosomal protein</keyword>
<keyword id="KW-0694">RNA-binding</keyword>
<keyword id="KW-0699">rRNA-binding</keyword>
<proteinExistence type="inferred from homology"/>
<name>RL9_DEHMC</name>
<gene>
    <name evidence="1" type="primary">rplI</name>
    <name type="ordered locus">cbdbA515</name>
</gene>
<organism>
    <name type="scientific">Dehalococcoides mccartyi (strain CBDB1)</name>
    <dbReference type="NCBI Taxonomy" id="255470"/>
    <lineage>
        <taxon>Bacteria</taxon>
        <taxon>Bacillati</taxon>
        <taxon>Chloroflexota</taxon>
        <taxon>Dehalococcoidia</taxon>
        <taxon>Dehalococcoidales</taxon>
        <taxon>Dehalococcoidaceae</taxon>
        <taxon>Dehalococcoides</taxon>
    </lineage>
</organism>
<sequence>MKVVFLKDVPGRGKTGDIKEVNDGYARNYLIPNKLAMPASAAVKSEIAAKQAAEERRKAKAEAEMVELAKNLDGAKVNLKAKTGAKDKLYGQITTTVIAAEIEKQTGKTIDKRKLELAEPIRQLGNYEVVIRFNKDLSSKINLAVTAEENT</sequence>
<protein>
    <recommendedName>
        <fullName evidence="1">Large ribosomal subunit protein bL9</fullName>
    </recommendedName>
    <alternativeName>
        <fullName evidence="2">50S ribosomal protein L9</fullName>
    </alternativeName>
</protein>
<evidence type="ECO:0000255" key="1">
    <source>
        <dbReference type="HAMAP-Rule" id="MF_00503"/>
    </source>
</evidence>
<evidence type="ECO:0000305" key="2"/>
<accession>Q3ZZV8</accession>
<dbReference type="EMBL" id="AJ965256">
    <property type="protein sequence ID" value="CAI82705.1"/>
    <property type="molecule type" value="Genomic_DNA"/>
</dbReference>
<dbReference type="RefSeq" id="WP_011309058.1">
    <property type="nucleotide sequence ID" value="NC_007356.1"/>
</dbReference>
<dbReference type="SMR" id="Q3ZZV8"/>
<dbReference type="KEGG" id="deh:cbdbA515"/>
<dbReference type="HOGENOM" id="CLU_078938_3_0_0"/>
<dbReference type="Proteomes" id="UP000000433">
    <property type="component" value="Chromosome"/>
</dbReference>
<dbReference type="GO" id="GO:1990904">
    <property type="term" value="C:ribonucleoprotein complex"/>
    <property type="evidence" value="ECO:0007669"/>
    <property type="project" value="UniProtKB-KW"/>
</dbReference>
<dbReference type="GO" id="GO:0005840">
    <property type="term" value="C:ribosome"/>
    <property type="evidence" value="ECO:0007669"/>
    <property type="project" value="UniProtKB-KW"/>
</dbReference>
<dbReference type="GO" id="GO:0019843">
    <property type="term" value="F:rRNA binding"/>
    <property type="evidence" value="ECO:0007669"/>
    <property type="project" value="UniProtKB-UniRule"/>
</dbReference>
<dbReference type="GO" id="GO:0003735">
    <property type="term" value="F:structural constituent of ribosome"/>
    <property type="evidence" value="ECO:0007669"/>
    <property type="project" value="InterPro"/>
</dbReference>
<dbReference type="GO" id="GO:0006412">
    <property type="term" value="P:translation"/>
    <property type="evidence" value="ECO:0007669"/>
    <property type="project" value="UniProtKB-UniRule"/>
</dbReference>
<dbReference type="Gene3D" id="3.10.430.100">
    <property type="entry name" value="Ribosomal protein L9, C-terminal domain"/>
    <property type="match status" value="1"/>
</dbReference>
<dbReference type="Gene3D" id="3.40.5.10">
    <property type="entry name" value="Ribosomal protein L9, N-terminal domain"/>
    <property type="match status" value="1"/>
</dbReference>
<dbReference type="HAMAP" id="MF_00503">
    <property type="entry name" value="Ribosomal_bL9"/>
    <property type="match status" value="1"/>
</dbReference>
<dbReference type="InterPro" id="IPR000244">
    <property type="entry name" value="Ribosomal_bL9"/>
</dbReference>
<dbReference type="InterPro" id="IPR009027">
    <property type="entry name" value="Ribosomal_bL9/RNase_H1_N"/>
</dbReference>
<dbReference type="InterPro" id="IPR020594">
    <property type="entry name" value="Ribosomal_bL9_bac/chp"/>
</dbReference>
<dbReference type="InterPro" id="IPR020069">
    <property type="entry name" value="Ribosomal_bL9_C"/>
</dbReference>
<dbReference type="InterPro" id="IPR036791">
    <property type="entry name" value="Ribosomal_bL9_C_sf"/>
</dbReference>
<dbReference type="InterPro" id="IPR020070">
    <property type="entry name" value="Ribosomal_bL9_N"/>
</dbReference>
<dbReference type="InterPro" id="IPR036935">
    <property type="entry name" value="Ribosomal_bL9_N_sf"/>
</dbReference>
<dbReference type="NCBIfam" id="TIGR00158">
    <property type="entry name" value="L9"/>
    <property type="match status" value="1"/>
</dbReference>
<dbReference type="PANTHER" id="PTHR21368">
    <property type="entry name" value="50S RIBOSOMAL PROTEIN L9"/>
    <property type="match status" value="1"/>
</dbReference>
<dbReference type="Pfam" id="PF03948">
    <property type="entry name" value="Ribosomal_L9_C"/>
    <property type="match status" value="1"/>
</dbReference>
<dbReference type="Pfam" id="PF01281">
    <property type="entry name" value="Ribosomal_L9_N"/>
    <property type="match status" value="1"/>
</dbReference>
<dbReference type="SUPFAM" id="SSF55658">
    <property type="entry name" value="L9 N-domain-like"/>
    <property type="match status" value="1"/>
</dbReference>
<dbReference type="SUPFAM" id="SSF55653">
    <property type="entry name" value="Ribosomal protein L9 C-domain"/>
    <property type="match status" value="1"/>
</dbReference>
<dbReference type="PROSITE" id="PS00651">
    <property type="entry name" value="RIBOSOMAL_L9"/>
    <property type="match status" value="1"/>
</dbReference>
<reference key="1">
    <citation type="journal article" date="2005" name="Nat. Biotechnol.">
        <title>Genome sequence of the chlorinated compound-respiring bacterium Dehalococcoides species strain CBDB1.</title>
        <authorList>
            <person name="Kube M."/>
            <person name="Beck A."/>
            <person name="Zinder S.H."/>
            <person name="Kuhl H."/>
            <person name="Reinhardt R."/>
            <person name="Adrian L."/>
        </authorList>
    </citation>
    <scope>NUCLEOTIDE SEQUENCE [LARGE SCALE GENOMIC DNA]</scope>
    <source>
        <strain>CBDB1</strain>
    </source>
</reference>
<comment type="function">
    <text evidence="1">Binds to the 23S rRNA.</text>
</comment>
<comment type="similarity">
    <text evidence="1">Belongs to the bacterial ribosomal protein bL9 family.</text>
</comment>
<feature type="chain" id="PRO_0000236516" description="Large ribosomal subunit protein bL9">
    <location>
        <begin position="1"/>
        <end position="151"/>
    </location>
</feature>